<feature type="chain" id="PRO_0000218062" description="Thiamine kinase">
    <location>
        <begin position="1"/>
        <end position="274"/>
    </location>
</feature>
<evidence type="ECO:0000255" key="1">
    <source>
        <dbReference type="HAMAP-Rule" id="MF_01604"/>
    </source>
</evidence>
<dbReference type="EC" id="2.7.1.89" evidence="1"/>
<dbReference type="EMBL" id="AE006468">
    <property type="protein sequence ID" value="AAL20137.1"/>
    <property type="molecule type" value="Genomic_DNA"/>
</dbReference>
<dbReference type="RefSeq" id="WP_001257342.1">
    <property type="nucleotide sequence ID" value="NC_003197.2"/>
</dbReference>
<dbReference type="SMR" id="Q8ZQ07"/>
<dbReference type="STRING" id="99287.STM1208"/>
<dbReference type="PaxDb" id="99287-STM1208"/>
<dbReference type="DNASU" id="1252726"/>
<dbReference type="KEGG" id="stm:STM1208"/>
<dbReference type="PATRIC" id="fig|99287.12.peg.1277"/>
<dbReference type="HOGENOM" id="CLU_055115_2_1_6"/>
<dbReference type="OMA" id="LMAGWYE"/>
<dbReference type="PhylomeDB" id="Q8ZQ07"/>
<dbReference type="BioCyc" id="SENT99287:STM1208-MONOMER"/>
<dbReference type="UniPathway" id="UPA00060">
    <property type="reaction ID" value="UER00596"/>
</dbReference>
<dbReference type="Proteomes" id="UP000001014">
    <property type="component" value="Chromosome"/>
</dbReference>
<dbReference type="GO" id="GO:0005524">
    <property type="term" value="F:ATP binding"/>
    <property type="evidence" value="ECO:0007669"/>
    <property type="project" value="UniProtKB-KW"/>
</dbReference>
<dbReference type="GO" id="GO:0019165">
    <property type="term" value="F:thiamine kinase activity"/>
    <property type="evidence" value="ECO:0007669"/>
    <property type="project" value="UniProtKB-UniRule"/>
</dbReference>
<dbReference type="GO" id="GO:0009229">
    <property type="term" value="P:thiamine diphosphate biosynthetic process"/>
    <property type="evidence" value="ECO:0007669"/>
    <property type="project" value="UniProtKB-UniRule"/>
</dbReference>
<dbReference type="GO" id="GO:0006772">
    <property type="term" value="P:thiamine metabolic process"/>
    <property type="evidence" value="ECO:0007669"/>
    <property type="project" value="InterPro"/>
</dbReference>
<dbReference type="Gene3D" id="3.90.1200.10">
    <property type="match status" value="1"/>
</dbReference>
<dbReference type="HAMAP" id="MF_01604">
    <property type="entry name" value="Thiamine_kinase"/>
    <property type="match status" value="1"/>
</dbReference>
<dbReference type="InterPro" id="IPR002575">
    <property type="entry name" value="Aminoglycoside_PTrfase"/>
</dbReference>
<dbReference type="InterPro" id="IPR011009">
    <property type="entry name" value="Kinase-like_dom_sf"/>
</dbReference>
<dbReference type="InterPro" id="IPR014093">
    <property type="entry name" value="Thiamine_kinase"/>
</dbReference>
<dbReference type="NCBIfam" id="NF007620">
    <property type="entry name" value="PRK10271.1"/>
    <property type="match status" value="1"/>
</dbReference>
<dbReference type="NCBIfam" id="TIGR02721">
    <property type="entry name" value="ycfN_thiK"/>
    <property type="match status" value="1"/>
</dbReference>
<dbReference type="Pfam" id="PF01636">
    <property type="entry name" value="APH"/>
    <property type="match status" value="1"/>
</dbReference>
<dbReference type="SUPFAM" id="SSF56112">
    <property type="entry name" value="Protein kinase-like (PK-like)"/>
    <property type="match status" value="1"/>
</dbReference>
<sequence length="274" mass="31941">MRSNNNNPLTRDEILSRYFPQYRPAVATSQGLSGGSCIIAHDTHRVVLRRHHDPDAPPAHFLRHYRALSQLPASLAPRALFYTPGWMAVEYLHGVVNSALPDADELAALLYHLHQQPRFGWRIALSPLLAQYWSCCDPARRTPFWLRRLKQLQKNGEPRPLRLAPLHMDVHGDNIVLTSAGLRLIDWEYAGDGDIALELAAVWVEDERQHRQLADAYAARARIDARQLWRQIRLWHPWVIMLKAGWFEYRWRQTGEQQFIRLADETWRQLRMKG</sequence>
<gene>
    <name evidence="1" type="primary">thiK</name>
    <name type="ordered locus">STM1208</name>
</gene>
<comment type="function">
    <text evidence="1">Catalyzes the ATP-dependent phosphorylation of thiamine to thiamine phosphate. Is involved in thiamine salvage.</text>
</comment>
<comment type="catalytic activity">
    <reaction evidence="1">
        <text>thiamine + ATP = thiamine phosphate + ADP + H(+)</text>
        <dbReference type="Rhea" id="RHEA:12012"/>
        <dbReference type="ChEBI" id="CHEBI:15378"/>
        <dbReference type="ChEBI" id="CHEBI:18385"/>
        <dbReference type="ChEBI" id="CHEBI:30616"/>
        <dbReference type="ChEBI" id="CHEBI:37575"/>
        <dbReference type="ChEBI" id="CHEBI:456216"/>
        <dbReference type="EC" id="2.7.1.89"/>
    </reaction>
    <physiologicalReaction direction="left-to-right" evidence="1">
        <dbReference type="Rhea" id="RHEA:12013"/>
    </physiologicalReaction>
</comment>
<comment type="pathway">
    <text evidence="1">Cofactor biosynthesis; thiamine diphosphate biosynthesis; thiamine phosphate from thiamine: step 1/1.</text>
</comment>
<comment type="similarity">
    <text evidence="1">Belongs to the thiamine kinase family.</text>
</comment>
<keyword id="KW-0067">ATP-binding</keyword>
<keyword id="KW-0418">Kinase</keyword>
<keyword id="KW-0547">Nucleotide-binding</keyword>
<keyword id="KW-1185">Reference proteome</keyword>
<keyword id="KW-0808">Transferase</keyword>
<organism>
    <name type="scientific">Salmonella typhimurium (strain LT2 / SGSC1412 / ATCC 700720)</name>
    <dbReference type="NCBI Taxonomy" id="99287"/>
    <lineage>
        <taxon>Bacteria</taxon>
        <taxon>Pseudomonadati</taxon>
        <taxon>Pseudomonadota</taxon>
        <taxon>Gammaproteobacteria</taxon>
        <taxon>Enterobacterales</taxon>
        <taxon>Enterobacteriaceae</taxon>
        <taxon>Salmonella</taxon>
    </lineage>
</organism>
<name>THIK_SALTY</name>
<accession>Q8ZQ07</accession>
<proteinExistence type="inferred from homology"/>
<protein>
    <recommendedName>
        <fullName evidence="1">Thiamine kinase</fullName>
        <ecNumber evidence="1">2.7.1.89</ecNumber>
    </recommendedName>
</protein>
<reference key="1">
    <citation type="journal article" date="2001" name="Nature">
        <title>Complete genome sequence of Salmonella enterica serovar Typhimurium LT2.</title>
        <authorList>
            <person name="McClelland M."/>
            <person name="Sanderson K.E."/>
            <person name="Spieth J."/>
            <person name="Clifton S.W."/>
            <person name="Latreille P."/>
            <person name="Courtney L."/>
            <person name="Porwollik S."/>
            <person name="Ali J."/>
            <person name="Dante M."/>
            <person name="Du F."/>
            <person name="Hou S."/>
            <person name="Layman D."/>
            <person name="Leonard S."/>
            <person name="Nguyen C."/>
            <person name="Scott K."/>
            <person name="Holmes A."/>
            <person name="Grewal N."/>
            <person name="Mulvaney E."/>
            <person name="Ryan E."/>
            <person name="Sun H."/>
            <person name="Florea L."/>
            <person name="Miller W."/>
            <person name="Stoneking T."/>
            <person name="Nhan M."/>
            <person name="Waterston R."/>
            <person name="Wilson R.K."/>
        </authorList>
    </citation>
    <scope>NUCLEOTIDE SEQUENCE [LARGE SCALE GENOMIC DNA]</scope>
    <source>
        <strain>LT2 / SGSC1412 / ATCC 700720</strain>
    </source>
</reference>